<sequence length="214" mass="25472">MRVRYKPWAEDYLKEHPNLVDMDGAHAGKMSEWFDKEQPIYIEIGSGMGQFITTLASKFPEINFVSMEREKSVMYKVLDKVKELNLTNLKMICNDAIELNEYFNDGEISRIYLNFSDPWPKKRHAKRRLTYHTFLALYQQILKEDGEIHFKTDNRGLFAFSLESMSQYGMYFTKLNLNLHDEDDEDNILTEYEKKFSEKGSRIYRMEAKFHKSI</sequence>
<comment type="function">
    <text evidence="2">Catalyzes the formation of N(7)-methylguanine at position 46 (m7G46) in tRNA.</text>
</comment>
<comment type="catalytic activity">
    <reaction evidence="2">
        <text>guanosine(46) in tRNA + S-adenosyl-L-methionine = N(7)-methylguanosine(46) in tRNA + S-adenosyl-L-homocysteine</text>
        <dbReference type="Rhea" id="RHEA:42708"/>
        <dbReference type="Rhea" id="RHEA-COMP:10188"/>
        <dbReference type="Rhea" id="RHEA-COMP:10189"/>
        <dbReference type="ChEBI" id="CHEBI:57856"/>
        <dbReference type="ChEBI" id="CHEBI:59789"/>
        <dbReference type="ChEBI" id="CHEBI:74269"/>
        <dbReference type="ChEBI" id="CHEBI:74480"/>
        <dbReference type="EC" id="2.1.1.33"/>
    </reaction>
</comment>
<comment type="pathway">
    <text evidence="2">tRNA modification; N(7)-methylguanine-tRNA biosynthesis.</text>
</comment>
<comment type="similarity">
    <text evidence="2">Belongs to the class I-like SAM-binding methyltransferase superfamily. TrmB family.</text>
</comment>
<feature type="chain" id="PRO_0000171396" description="tRNA (guanine-N(7)-)-methyltransferase">
    <location>
        <begin position="1"/>
        <end position="214"/>
    </location>
</feature>
<feature type="active site" evidence="1">
    <location>
        <position position="117"/>
    </location>
</feature>
<feature type="binding site" evidence="2">
    <location>
        <position position="43"/>
    </location>
    <ligand>
        <name>S-adenosyl-L-methionine</name>
        <dbReference type="ChEBI" id="CHEBI:59789"/>
    </ligand>
</feature>
<feature type="binding site" evidence="2">
    <location>
        <position position="68"/>
    </location>
    <ligand>
        <name>S-adenosyl-L-methionine</name>
        <dbReference type="ChEBI" id="CHEBI:59789"/>
    </ligand>
</feature>
<feature type="binding site" evidence="2">
    <location>
        <position position="95"/>
    </location>
    <ligand>
        <name>S-adenosyl-L-methionine</name>
        <dbReference type="ChEBI" id="CHEBI:59789"/>
    </ligand>
</feature>
<feature type="binding site" evidence="2">
    <location>
        <position position="117"/>
    </location>
    <ligand>
        <name>S-adenosyl-L-methionine</name>
        <dbReference type="ChEBI" id="CHEBI:59789"/>
    </ligand>
</feature>
<feature type="binding site" evidence="2">
    <location>
        <position position="121"/>
    </location>
    <ligand>
        <name>substrate</name>
    </ligand>
</feature>
<feature type="binding site" evidence="2">
    <location>
        <position position="153"/>
    </location>
    <ligand>
        <name>substrate</name>
    </ligand>
</feature>
<feature type="binding site" evidence="2">
    <location>
        <begin position="190"/>
        <end position="193"/>
    </location>
    <ligand>
        <name>substrate</name>
    </ligand>
</feature>
<keyword id="KW-0489">Methyltransferase</keyword>
<keyword id="KW-0949">S-adenosyl-L-methionine</keyword>
<keyword id="KW-0808">Transferase</keyword>
<keyword id="KW-0819">tRNA processing</keyword>
<organism>
    <name type="scientific">Staphylococcus haemolyticus (strain JCSC1435)</name>
    <dbReference type="NCBI Taxonomy" id="279808"/>
    <lineage>
        <taxon>Bacteria</taxon>
        <taxon>Bacillati</taxon>
        <taxon>Bacillota</taxon>
        <taxon>Bacilli</taxon>
        <taxon>Bacillales</taxon>
        <taxon>Staphylococcaceae</taxon>
        <taxon>Staphylococcus</taxon>
    </lineage>
</organism>
<reference key="1">
    <citation type="journal article" date="2005" name="J. Bacteriol.">
        <title>Whole-genome sequencing of Staphylococcus haemolyticus uncovers the extreme plasticity of its genome and the evolution of human-colonizing staphylococcal species.</title>
        <authorList>
            <person name="Takeuchi F."/>
            <person name="Watanabe S."/>
            <person name="Baba T."/>
            <person name="Yuzawa H."/>
            <person name="Ito T."/>
            <person name="Morimoto Y."/>
            <person name="Kuroda M."/>
            <person name="Cui L."/>
            <person name="Takahashi M."/>
            <person name="Ankai A."/>
            <person name="Baba S."/>
            <person name="Fukui S."/>
            <person name="Lee J.C."/>
            <person name="Hiramatsu K."/>
        </authorList>
    </citation>
    <scope>NUCLEOTIDE SEQUENCE [LARGE SCALE GENOMIC DNA]</scope>
    <source>
        <strain>JCSC1435</strain>
    </source>
</reference>
<protein>
    <recommendedName>
        <fullName evidence="2">tRNA (guanine-N(7)-)-methyltransferase</fullName>
        <ecNumber evidence="2">2.1.1.33</ecNumber>
    </recommendedName>
    <alternativeName>
        <fullName evidence="2">tRNA (guanine(46)-N(7))-methyltransferase</fullName>
    </alternativeName>
    <alternativeName>
        <fullName evidence="2">tRNA(m7G46)-methyltransferase</fullName>
    </alternativeName>
</protein>
<proteinExistence type="inferred from homology"/>
<evidence type="ECO:0000250" key="1"/>
<evidence type="ECO:0000255" key="2">
    <source>
        <dbReference type="HAMAP-Rule" id="MF_01057"/>
    </source>
</evidence>
<accession>Q4L792</accession>
<dbReference type="EC" id="2.1.1.33" evidence="2"/>
<dbReference type="EMBL" id="AP006716">
    <property type="protein sequence ID" value="BAE04483.1"/>
    <property type="molecule type" value="Genomic_DNA"/>
</dbReference>
<dbReference type="RefSeq" id="WP_011275475.1">
    <property type="nucleotide sequence ID" value="NC_007168.1"/>
</dbReference>
<dbReference type="SMR" id="Q4L792"/>
<dbReference type="KEGG" id="sha:SH1174"/>
<dbReference type="eggNOG" id="COG0220">
    <property type="taxonomic scope" value="Bacteria"/>
</dbReference>
<dbReference type="HOGENOM" id="CLU_050910_2_1_9"/>
<dbReference type="OrthoDB" id="9802090at2"/>
<dbReference type="UniPathway" id="UPA00989"/>
<dbReference type="Proteomes" id="UP000000543">
    <property type="component" value="Chromosome"/>
</dbReference>
<dbReference type="GO" id="GO:0043527">
    <property type="term" value="C:tRNA methyltransferase complex"/>
    <property type="evidence" value="ECO:0007669"/>
    <property type="project" value="TreeGrafter"/>
</dbReference>
<dbReference type="GO" id="GO:0008176">
    <property type="term" value="F:tRNA (guanine(46)-N7)-methyltransferase activity"/>
    <property type="evidence" value="ECO:0007669"/>
    <property type="project" value="UniProtKB-UniRule"/>
</dbReference>
<dbReference type="FunFam" id="3.40.50.150:FF:000035">
    <property type="entry name" value="tRNA (guanine-N(7)-)-methyltransferase"/>
    <property type="match status" value="1"/>
</dbReference>
<dbReference type="Gene3D" id="3.40.50.150">
    <property type="entry name" value="Vaccinia Virus protein VP39"/>
    <property type="match status" value="1"/>
</dbReference>
<dbReference type="HAMAP" id="MF_01057">
    <property type="entry name" value="tRNA_methyltr_TrmB"/>
    <property type="match status" value="1"/>
</dbReference>
<dbReference type="InterPro" id="IPR029063">
    <property type="entry name" value="SAM-dependent_MTases_sf"/>
</dbReference>
<dbReference type="InterPro" id="IPR003358">
    <property type="entry name" value="tRNA_(Gua-N-7)_MeTrfase_Trmb"/>
</dbReference>
<dbReference type="InterPro" id="IPR055361">
    <property type="entry name" value="tRNA_methyltr_TrmB_bact"/>
</dbReference>
<dbReference type="NCBIfam" id="NF001080">
    <property type="entry name" value="PRK00121.2-2"/>
    <property type="match status" value="1"/>
</dbReference>
<dbReference type="NCBIfam" id="TIGR00091">
    <property type="entry name" value="tRNA (guanosine(46)-N7)-methyltransferase TrmB"/>
    <property type="match status" value="1"/>
</dbReference>
<dbReference type="PANTHER" id="PTHR23417">
    <property type="entry name" value="3-DEOXY-D-MANNO-OCTULOSONIC-ACID TRANSFERASE/TRNA GUANINE-N 7 - -METHYLTRANSFERASE"/>
    <property type="match status" value="1"/>
</dbReference>
<dbReference type="PANTHER" id="PTHR23417:SF14">
    <property type="entry name" value="PENTACOTRIPEPTIDE-REPEAT REGION OF PRORP DOMAIN-CONTAINING PROTEIN"/>
    <property type="match status" value="1"/>
</dbReference>
<dbReference type="Pfam" id="PF02390">
    <property type="entry name" value="Methyltransf_4"/>
    <property type="match status" value="1"/>
</dbReference>
<dbReference type="SUPFAM" id="SSF53335">
    <property type="entry name" value="S-adenosyl-L-methionine-dependent methyltransferases"/>
    <property type="match status" value="1"/>
</dbReference>
<dbReference type="PROSITE" id="PS51625">
    <property type="entry name" value="SAM_MT_TRMB"/>
    <property type="match status" value="1"/>
</dbReference>
<gene>
    <name evidence="2" type="primary">trmB</name>
    <name type="ordered locus">SH1174</name>
</gene>
<name>TRMB_STAHJ</name>